<evidence type="ECO:0000250" key="1"/>
<evidence type="ECO:0000305" key="2"/>
<name>Y495_SYNY3</name>
<gene>
    <name type="ordered locus">slr0495</name>
</gene>
<comment type="function">
    <text evidence="1">Probably transfers the 4'-phosphopantetheine moiety from coenzyme A (CoA) to a serine residue of a carrier protein domain.</text>
</comment>
<comment type="cofactor">
    <cofactor evidence="1">
        <name>Mg(2+)</name>
        <dbReference type="ChEBI" id="CHEBI:18420"/>
    </cofactor>
</comment>
<comment type="similarity">
    <text evidence="2">Belongs to the P-Pant transferase superfamily. Gsp/Sfp/HetI/AcpT family.</text>
</comment>
<sequence>MLPQPQIWLCPTDRPLIPGYQALLSSEEMARGERYQRPQDKQRFLTMRLALRILLARQLDCLPQQLQFTYGPQGKPELVDRERRSPWFNVAHSGNYGLIGLSTEGEIGVDLQIMLPKPHYLKLAKRFFAPQEVQQLESLEGEKRTKLFYQLWTAKEAFLKATGKGISGGLNQVIPDENLAKYQYLPDSGDTNHWRLSSQPLLADQGSNDNYWMAIAWCTNEVNQVESNYLPNIQPFQWPRNLDSLP</sequence>
<proteinExistence type="inferred from homology"/>
<feature type="chain" id="PRO_0000206087" description="Putative 4'-phosphopantetheinyl transferase slr0495">
    <location>
        <begin position="1"/>
        <end position="246"/>
    </location>
</feature>
<feature type="binding site" evidence="1">
    <location>
        <position position="110"/>
    </location>
    <ligand>
        <name>Mg(2+)</name>
        <dbReference type="ChEBI" id="CHEBI:18420"/>
    </ligand>
</feature>
<feature type="binding site" evidence="1">
    <location>
        <position position="156"/>
    </location>
    <ligand>
        <name>Mg(2+)</name>
        <dbReference type="ChEBI" id="CHEBI:18420"/>
    </ligand>
</feature>
<reference key="1">
    <citation type="journal article" date="1995" name="DNA Res.">
        <title>Sequence analysis of the genome of the unicellular cyanobacterium Synechocystis sp. strain PCC6803. I. Sequence features in the 1 Mb region from map positions 64% to 92% of the genome.</title>
        <authorList>
            <person name="Kaneko T."/>
            <person name="Tanaka A."/>
            <person name="Sato S."/>
            <person name="Kotani H."/>
            <person name="Sazuka T."/>
            <person name="Miyajima N."/>
            <person name="Sugiura M."/>
            <person name="Tabata S."/>
        </authorList>
    </citation>
    <scope>NUCLEOTIDE SEQUENCE [LARGE SCALE GENOMIC DNA]</scope>
    <source>
        <strain>ATCC 27184 / PCC 6803 / N-1</strain>
    </source>
</reference>
<reference key="2">
    <citation type="journal article" date="1996" name="DNA Res.">
        <title>Sequence analysis of the genome of the unicellular cyanobacterium Synechocystis sp. strain PCC6803. II. Sequence determination of the entire genome and assignment of potential protein-coding regions.</title>
        <authorList>
            <person name="Kaneko T."/>
            <person name="Sato S."/>
            <person name="Kotani H."/>
            <person name="Tanaka A."/>
            <person name="Asamizu E."/>
            <person name="Nakamura Y."/>
            <person name="Miyajima N."/>
            <person name="Hirosawa M."/>
            <person name="Sugiura M."/>
            <person name="Sasamoto S."/>
            <person name="Kimura T."/>
            <person name="Hosouchi T."/>
            <person name="Matsuno A."/>
            <person name="Muraki A."/>
            <person name="Nakazaki N."/>
            <person name="Naruo K."/>
            <person name="Okumura S."/>
            <person name="Shimpo S."/>
            <person name="Takeuchi C."/>
            <person name="Wada T."/>
            <person name="Watanabe A."/>
            <person name="Yamada M."/>
            <person name="Yasuda M."/>
            <person name="Tabata S."/>
        </authorList>
    </citation>
    <scope>NUCLEOTIDE SEQUENCE [LARGE SCALE GENOMIC DNA]</scope>
    <source>
        <strain>ATCC 27184 / PCC 6803 / Kazusa</strain>
    </source>
</reference>
<dbReference type="EC" id="2.7.8.-"/>
<dbReference type="EMBL" id="BA000022">
    <property type="protein sequence ID" value="BAA10326.1"/>
    <property type="molecule type" value="Genomic_DNA"/>
</dbReference>
<dbReference type="PIR" id="S74408">
    <property type="entry name" value="S74408"/>
</dbReference>
<dbReference type="SMR" id="Q55185"/>
<dbReference type="FunCoup" id="Q55185">
    <property type="interactions" value="133"/>
</dbReference>
<dbReference type="IntAct" id="Q55185">
    <property type="interactions" value="3"/>
</dbReference>
<dbReference type="STRING" id="1148.gene:10499826"/>
<dbReference type="PaxDb" id="1148-1001183"/>
<dbReference type="EnsemblBacteria" id="BAA10326">
    <property type="protein sequence ID" value="BAA10326"/>
    <property type="gene ID" value="BAA10326"/>
</dbReference>
<dbReference type="KEGG" id="syn:slr0495"/>
<dbReference type="eggNOG" id="COG2091">
    <property type="taxonomic scope" value="Bacteria"/>
</dbReference>
<dbReference type="InParanoid" id="Q55185"/>
<dbReference type="PhylomeDB" id="Q55185"/>
<dbReference type="Proteomes" id="UP000001425">
    <property type="component" value="Chromosome"/>
</dbReference>
<dbReference type="GO" id="GO:0005829">
    <property type="term" value="C:cytosol"/>
    <property type="evidence" value="ECO:0000318"/>
    <property type="project" value="GO_Central"/>
</dbReference>
<dbReference type="GO" id="GO:0008897">
    <property type="term" value="F:holo-[acyl-carrier-protein] synthase activity"/>
    <property type="evidence" value="ECO:0000318"/>
    <property type="project" value="GO_Central"/>
</dbReference>
<dbReference type="GO" id="GO:0000287">
    <property type="term" value="F:magnesium ion binding"/>
    <property type="evidence" value="ECO:0007669"/>
    <property type="project" value="InterPro"/>
</dbReference>
<dbReference type="GO" id="GO:0006633">
    <property type="term" value="P:fatty acid biosynthetic process"/>
    <property type="evidence" value="ECO:0007669"/>
    <property type="project" value="InterPro"/>
</dbReference>
<dbReference type="GO" id="GO:0019878">
    <property type="term" value="P:lysine biosynthetic process via aminoadipic acid"/>
    <property type="evidence" value="ECO:0000318"/>
    <property type="project" value="GO_Central"/>
</dbReference>
<dbReference type="Gene3D" id="3.90.470.20">
    <property type="entry name" value="4'-phosphopantetheinyl transferase domain"/>
    <property type="match status" value="2"/>
</dbReference>
<dbReference type="InterPro" id="IPR008278">
    <property type="entry name" value="4-PPantetheinyl_Trfase_dom"/>
</dbReference>
<dbReference type="InterPro" id="IPR037143">
    <property type="entry name" value="4-PPantetheinyl_Trfase_dom_sf"/>
</dbReference>
<dbReference type="InterPro" id="IPR055066">
    <property type="entry name" value="AASDHPPT_N"/>
</dbReference>
<dbReference type="InterPro" id="IPR050559">
    <property type="entry name" value="P-Pant_transferase_sf"/>
</dbReference>
<dbReference type="InterPro" id="IPR004568">
    <property type="entry name" value="Ppantetheine-prot_Trfase_dom"/>
</dbReference>
<dbReference type="NCBIfam" id="TIGR00556">
    <property type="entry name" value="pantethn_trn"/>
    <property type="match status" value="1"/>
</dbReference>
<dbReference type="PANTHER" id="PTHR12215:SF10">
    <property type="entry name" value="L-AMINOADIPATE-SEMIALDEHYDE DEHYDROGENASE-PHOSPHOPANTETHEINYL TRANSFERASE"/>
    <property type="match status" value="1"/>
</dbReference>
<dbReference type="PANTHER" id="PTHR12215">
    <property type="entry name" value="PHOSPHOPANTETHEINE TRANSFERASE"/>
    <property type="match status" value="1"/>
</dbReference>
<dbReference type="Pfam" id="PF22624">
    <property type="entry name" value="AASDHPPT_N"/>
    <property type="match status" value="1"/>
</dbReference>
<dbReference type="Pfam" id="PF01648">
    <property type="entry name" value="ACPS"/>
    <property type="match status" value="1"/>
</dbReference>
<dbReference type="SUPFAM" id="SSF56214">
    <property type="entry name" value="4'-phosphopantetheinyl transferase"/>
    <property type="match status" value="2"/>
</dbReference>
<accession>Q55185</accession>
<keyword id="KW-0460">Magnesium</keyword>
<keyword id="KW-0479">Metal-binding</keyword>
<keyword id="KW-1185">Reference proteome</keyword>
<keyword id="KW-0808">Transferase</keyword>
<organism>
    <name type="scientific">Synechocystis sp. (strain ATCC 27184 / PCC 6803 / Kazusa)</name>
    <dbReference type="NCBI Taxonomy" id="1111708"/>
    <lineage>
        <taxon>Bacteria</taxon>
        <taxon>Bacillati</taxon>
        <taxon>Cyanobacteriota</taxon>
        <taxon>Cyanophyceae</taxon>
        <taxon>Synechococcales</taxon>
        <taxon>Merismopediaceae</taxon>
        <taxon>Synechocystis</taxon>
    </lineage>
</organism>
<protein>
    <recommendedName>
        <fullName>Putative 4'-phosphopantetheinyl transferase slr0495</fullName>
        <ecNumber>2.7.8.-</ecNumber>
    </recommendedName>
</protein>